<name>GLMS_CHLAB</name>
<keyword id="KW-0032">Aminotransferase</keyword>
<keyword id="KW-0963">Cytoplasm</keyword>
<keyword id="KW-0315">Glutamine amidotransferase</keyword>
<keyword id="KW-0677">Repeat</keyword>
<keyword id="KW-0808">Transferase</keyword>
<comment type="function">
    <text evidence="1">Catalyzes the first step in hexosamine metabolism, converting fructose-6P into glucosamine-6P using glutamine as a nitrogen source.</text>
</comment>
<comment type="catalytic activity">
    <reaction evidence="1">
        <text>D-fructose 6-phosphate + L-glutamine = D-glucosamine 6-phosphate + L-glutamate</text>
        <dbReference type="Rhea" id="RHEA:13237"/>
        <dbReference type="ChEBI" id="CHEBI:29985"/>
        <dbReference type="ChEBI" id="CHEBI:58359"/>
        <dbReference type="ChEBI" id="CHEBI:58725"/>
        <dbReference type="ChEBI" id="CHEBI:61527"/>
        <dbReference type="EC" id="2.6.1.16"/>
    </reaction>
</comment>
<comment type="subunit">
    <text evidence="1">Homodimer.</text>
</comment>
<comment type="subcellular location">
    <subcellularLocation>
        <location evidence="1">Cytoplasm</location>
    </subcellularLocation>
</comment>
<evidence type="ECO:0000255" key="1">
    <source>
        <dbReference type="HAMAP-Rule" id="MF_00164"/>
    </source>
</evidence>
<dbReference type="EC" id="2.6.1.16" evidence="1"/>
<dbReference type="EMBL" id="CR848038">
    <property type="protein sequence ID" value="CAH64203.1"/>
    <property type="molecule type" value="Genomic_DNA"/>
</dbReference>
<dbReference type="RefSeq" id="WP_011097316.1">
    <property type="nucleotide sequence ID" value="NC_004552.2"/>
</dbReference>
<dbReference type="SMR" id="Q5L589"/>
<dbReference type="KEGG" id="cab:CAB756"/>
<dbReference type="eggNOG" id="COG0449">
    <property type="taxonomic scope" value="Bacteria"/>
</dbReference>
<dbReference type="HOGENOM" id="CLU_012520_5_2_0"/>
<dbReference type="OrthoDB" id="106547at2"/>
<dbReference type="Proteomes" id="UP000001012">
    <property type="component" value="Chromosome"/>
</dbReference>
<dbReference type="GO" id="GO:0005829">
    <property type="term" value="C:cytosol"/>
    <property type="evidence" value="ECO:0007669"/>
    <property type="project" value="TreeGrafter"/>
</dbReference>
<dbReference type="GO" id="GO:0097367">
    <property type="term" value="F:carbohydrate derivative binding"/>
    <property type="evidence" value="ECO:0007669"/>
    <property type="project" value="InterPro"/>
</dbReference>
<dbReference type="GO" id="GO:0004360">
    <property type="term" value="F:glutamine-fructose-6-phosphate transaminase (isomerizing) activity"/>
    <property type="evidence" value="ECO:0007669"/>
    <property type="project" value="UniProtKB-UniRule"/>
</dbReference>
<dbReference type="GO" id="GO:0005975">
    <property type="term" value="P:carbohydrate metabolic process"/>
    <property type="evidence" value="ECO:0007669"/>
    <property type="project" value="UniProtKB-UniRule"/>
</dbReference>
<dbReference type="GO" id="GO:0006002">
    <property type="term" value="P:fructose 6-phosphate metabolic process"/>
    <property type="evidence" value="ECO:0007669"/>
    <property type="project" value="TreeGrafter"/>
</dbReference>
<dbReference type="GO" id="GO:0006487">
    <property type="term" value="P:protein N-linked glycosylation"/>
    <property type="evidence" value="ECO:0007669"/>
    <property type="project" value="TreeGrafter"/>
</dbReference>
<dbReference type="GO" id="GO:0006047">
    <property type="term" value="P:UDP-N-acetylglucosamine metabolic process"/>
    <property type="evidence" value="ECO:0007669"/>
    <property type="project" value="TreeGrafter"/>
</dbReference>
<dbReference type="CDD" id="cd00714">
    <property type="entry name" value="GFAT"/>
    <property type="match status" value="1"/>
</dbReference>
<dbReference type="CDD" id="cd05008">
    <property type="entry name" value="SIS_GlmS_GlmD_1"/>
    <property type="match status" value="1"/>
</dbReference>
<dbReference type="CDD" id="cd05009">
    <property type="entry name" value="SIS_GlmS_GlmD_2"/>
    <property type="match status" value="1"/>
</dbReference>
<dbReference type="FunFam" id="3.40.50.10490:FF:000001">
    <property type="entry name" value="Glutamine--fructose-6-phosphate aminotransferase [isomerizing]"/>
    <property type="match status" value="1"/>
</dbReference>
<dbReference type="FunFam" id="3.60.20.10:FF:000006">
    <property type="entry name" value="Glutamine--fructose-6-phosphate aminotransferase [isomerizing]"/>
    <property type="match status" value="1"/>
</dbReference>
<dbReference type="Gene3D" id="3.40.50.10490">
    <property type="entry name" value="Glucose-6-phosphate isomerase like protein, domain 1"/>
    <property type="match status" value="2"/>
</dbReference>
<dbReference type="Gene3D" id="3.60.20.10">
    <property type="entry name" value="Glutamine Phosphoribosylpyrophosphate, subunit 1, domain 1"/>
    <property type="match status" value="1"/>
</dbReference>
<dbReference type="HAMAP" id="MF_00164">
    <property type="entry name" value="GlmS"/>
    <property type="match status" value="1"/>
</dbReference>
<dbReference type="InterPro" id="IPR017932">
    <property type="entry name" value="GATase_2_dom"/>
</dbReference>
<dbReference type="InterPro" id="IPR005855">
    <property type="entry name" value="GFAT"/>
</dbReference>
<dbReference type="InterPro" id="IPR047084">
    <property type="entry name" value="GFAT_N"/>
</dbReference>
<dbReference type="InterPro" id="IPR035466">
    <property type="entry name" value="GlmS/AgaS_SIS"/>
</dbReference>
<dbReference type="InterPro" id="IPR035490">
    <property type="entry name" value="GlmS/FrlB_SIS"/>
</dbReference>
<dbReference type="InterPro" id="IPR029055">
    <property type="entry name" value="Ntn_hydrolases_N"/>
</dbReference>
<dbReference type="InterPro" id="IPR001347">
    <property type="entry name" value="SIS_dom"/>
</dbReference>
<dbReference type="InterPro" id="IPR046348">
    <property type="entry name" value="SIS_dom_sf"/>
</dbReference>
<dbReference type="NCBIfam" id="TIGR01135">
    <property type="entry name" value="glmS"/>
    <property type="match status" value="1"/>
</dbReference>
<dbReference type="NCBIfam" id="NF001484">
    <property type="entry name" value="PRK00331.1"/>
    <property type="match status" value="1"/>
</dbReference>
<dbReference type="PANTHER" id="PTHR10937">
    <property type="entry name" value="GLUCOSAMINE--FRUCTOSE-6-PHOSPHATE AMINOTRANSFERASE, ISOMERIZING"/>
    <property type="match status" value="1"/>
</dbReference>
<dbReference type="PANTHER" id="PTHR10937:SF0">
    <property type="entry name" value="GLUTAMINE--FRUCTOSE-6-PHOSPHATE TRANSAMINASE (ISOMERIZING)"/>
    <property type="match status" value="1"/>
</dbReference>
<dbReference type="Pfam" id="PF13522">
    <property type="entry name" value="GATase_6"/>
    <property type="match status" value="1"/>
</dbReference>
<dbReference type="Pfam" id="PF01380">
    <property type="entry name" value="SIS"/>
    <property type="match status" value="2"/>
</dbReference>
<dbReference type="SUPFAM" id="SSF56235">
    <property type="entry name" value="N-terminal nucleophile aminohydrolases (Ntn hydrolases)"/>
    <property type="match status" value="1"/>
</dbReference>
<dbReference type="SUPFAM" id="SSF53697">
    <property type="entry name" value="SIS domain"/>
    <property type="match status" value="1"/>
</dbReference>
<dbReference type="PROSITE" id="PS51278">
    <property type="entry name" value="GATASE_TYPE_2"/>
    <property type="match status" value="1"/>
</dbReference>
<dbReference type="PROSITE" id="PS51464">
    <property type="entry name" value="SIS"/>
    <property type="match status" value="2"/>
</dbReference>
<protein>
    <recommendedName>
        <fullName evidence="1">Glutamine--fructose-6-phosphate aminotransferase [isomerizing]</fullName>
        <ecNumber evidence="1">2.6.1.16</ecNumber>
    </recommendedName>
    <alternativeName>
        <fullName evidence="1">D-fructose-6-phosphate amidotransferase</fullName>
    </alternativeName>
    <alternativeName>
        <fullName evidence="1">GFAT</fullName>
    </alternativeName>
    <alternativeName>
        <fullName evidence="1">Glucosamine-6-phosphate synthase</fullName>
    </alternativeName>
    <alternativeName>
        <fullName evidence="1">Hexosephosphate aminotransferase</fullName>
    </alternativeName>
    <alternativeName>
        <fullName evidence="1">L-glutamine--D-fructose-6-phosphate amidotransferase</fullName>
    </alternativeName>
</protein>
<proteinExistence type="inferred from homology"/>
<accession>Q5L589</accession>
<feature type="initiator methionine" description="Removed" evidence="1">
    <location>
        <position position="1"/>
    </location>
</feature>
<feature type="chain" id="PRO_0000135316" description="Glutamine--fructose-6-phosphate aminotransferase [isomerizing]">
    <location>
        <begin position="2"/>
        <end position="609"/>
    </location>
</feature>
<feature type="domain" description="Glutamine amidotransferase type-2" evidence="1">
    <location>
        <begin position="2"/>
        <end position="219"/>
    </location>
</feature>
<feature type="domain" description="SIS 1" evidence="1">
    <location>
        <begin position="280"/>
        <end position="426"/>
    </location>
</feature>
<feature type="domain" description="SIS 2" evidence="1">
    <location>
        <begin position="458"/>
        <end position="599"/>
    </location>
</feature>
<feature type="active site" description="Nucleophile; for GATase activity" evidence="1">
    <location>
        <position position="2"/>
    </location>
</feature>
<feature type="active site" description="For Fru-6P isomerization activity" evidence="1">
    <location>
        <position position="604"/>
    </location>
</feature>
<organism>
    <name type="scientific">Chlamydia abortus (strain DSM 27085 / S26/3)</name>
    <name type="common">Chlamydophila abortus</name>
    <dbReference type="NCBI Taxonomy" id="218497"/>
    <lineage>
        <taxon>Bacteria</taxon>
        <taxon>Pseudomonadati</taxon>
        <taxon>Chlamydiota</taxon>
        <taxon>Chlamydiia</taxon>
        <taxon>Chlamydiales</taxon>
        <taxon>Chlamydiaceae</taxon>
        <taxon>Chlamydia/Chlamydophila group</taxon>
        <taxon>Chlamydia</taxon>
    </lineage>
</organism>
<reference key="1">
    <citation type="journal article" date="2005" name="Genome Res.">
        <title>The Chlamydophila abortus genome sequence reveals an array of variable proteins that contribute to interspecies variation.</title>
        <authorList>
            <person name="Thomson N.R."/>
            <person name="Yeats C."/>
            <person name="Bell K."/>
            <person name="Holden M.T.G."/>
            <person name="Bentley S.D."/>
            <person name="Livingstone M."/>
            <person name="Cerdeno-Tarraga A.-M."/>
            <person name="Harris B."/>
            <person name="Doggett J."/>
            <person name="Ormond D."/>
            <person name="Mungall K."/>
            <person name="Clarke K."/>
            <person name="Feltwell T."/>
            <person name="Hance Z."/>
            <person name="Sanders M."/>
            <person name="Quail M.A."/>
            <person name="Price C."/>
            <person name="Barrell B.G."/>
            <person name="Parkhill J."/>
            <person name="Longbottom D."/>
        </authorList>
    </citation>
    <scope>NUCLEOTIDE SEQUENCE [LARGE SCALE GENOMIC DNA]</scope>
    <source>
        <strain>DSM 27085 / S26/3</strain>
    </source>
</reference>
<gene>
    <name evidence="1" type="primary">glmS</name>
    <name type="ordered locus">CAB756</name>
</gene>
<sequence length="609" mass="67057">MCGIFGYLGSKLAIPVVLDGLAKLEYRGYDSAGLASIHLGDLFVRKTIGRVDELRHSLEQENIQSLLAIGHTRWATHGVPTVSNAHPHVDENRTCAVVHNGIIENFKELKSFLLSEGVSFSSDTDSEVIAQLFAYRYQTTADLIHSFSWTLSQLQGSFSCGLIHKDHPDVLLCAAQESPLILGLGEGENFIASDSRAFLKHTQSIQALASGELAIVGLGHEVETYNFALKRISKPVRQVTYTDAGSDKQGYSYYMLKEIYEQPEVLERLVHKYLDPQGHISEKFLQGFPLEDFDEISIVACGSSYHAGFLAKYIIESLVSIPVHVEVASEFRYRRAYIGQKTLAILISQSGETADTLAALKEFRRRQVSCVLGICNVEESALATGVDHCLFLEAGIEIGVASTKAFTAQLLLLILLGLKLTISKHTLSLTEHCACGKGLLELPELCNRLLANENLHSWAHTYCNEDRFIFLGRRLMYPICMEAALKLKEIAYVEANCYPAGEMKHGPIALISKGSPVITFCGDSTVYEKMVGCIMEVKARQAHVIAVASEAQEDIAAVSDFQIYVPNSHSLASPILYTIVGQIMAYTMALKKGNEIDCPRNLAKSVTVE</sequence>